<proteinExistence type="evidence at transcript level"/>
<evidence type="ECO:0000250" key="1">
    <source>
        <dbReference type="UniProtKB" id="A6BLY7"/>
    </source>
</evidence>
<evidence type="ECO:0000250" key="2">
    <source>
        <dbReference type="UniProtKB" id="Q7Z3Y7"/>
    </source>
</evidence>
<evidence type="ECO:0000255" key="3"/>
<evidence type="ECO:0000255" key="4">
    <source>
        <dbReference type="PROSITE-ProRule" id="PRU01188"/>
    </source>
</evidence>
<evidence type="ECO:0000256" key="5">
    <source>
        <dbReference type="SAM" id="MobiDB-lite"/>
    </source>
</evidence>
<evidence type="ECO:0000305" key="6"/>
<evidence type="ECO:0000312" key="7">
    <source>
        <dbReference type="EMBL" id="AAI18317.1"/>
    </source>
</evidence>
<organism>
    <name type="scientific">Bos taurus</name>
    <name type="common">Bovine</name>
    <dbReference type="NCBI Taxonomy" id="9913"/>
    <lineage>
        <taxon>Eukaryota</taxon>
        <taxon>Metazoa</taxon>
        <taxon>Chordata</taxon>
        <taxon>Craniata</taxon>
        <taxon>Vertebrata</taxon>
        <taxon>Euteleostomi</taxon>
        <taxon>Mammalia</taxon>
        <taxon>Eutheria</taxon>
        <taxon>Laurasiatheria</taxon>
        <taxon>Artiodactyla</taxon>
        <taxon>Ruminantia</taxon>
        <taxon>Pecora</taxon>
        <taxon>Bovidae</taxon>
        <taxon>Bovinae</taxon>
        <taxon>Bos</taxon>
    </lineage>
</organism>
<dbReference type="EMBL" id="BC118316">
    <property type="protein sequence ID" value="AAI18317.1"/>
    <property type="molecule type" value="mRNA"/>
</dbReference>
<dbReference type="RefSeq" id="NP_001073844.1">
    <property type="nucleotide sequence ID" value="NM_001080375.1"/>
</dbReference>
<dbReference type="SMR" id="Q148H6"/>
<dbReference type="FunCoup" id="Q148H6">
    <property type="interactions" value="122"/>
</dbReference>
<dbReference type="STRING" id="9913.ENSBTAP00000034743"/>
<dbReference type="PaxDb" id="9913-ENSBTAP00000034743"/>
<dbReference type="PeptideAtlas" id="Q148H6"/>
<dbReference type="GeneID" id="788909"/>
<dbReference type="KEGG" id="bta:788909"/>
<dbReference type="CTD" id="162605"/>
<dbReference type="VEuPathDB" id="HostDB:ENSBTAG00000030555"/>
<dbReference type="eggNOG" id="ENOG502SHRG">
    <property type="taxonomic scope" value="Eukaryota"/>
</dbReference>
<dbReference type="HOGENOM" id="CLU_012560_8_3_1"/>
<dbReference type="InParanoid" id="Q148H6"/>
<dbReference type="OMA" id="FAGSNAC"/>
<dbReference type="OrthoDB" id="9532690at2759"/>
<dbReference type="TreeFam" id="TF332742"/>
<dbReference type="Reactome" id="R-BTA-6805567">
    <property type="pathway name" value="Keratinization"/>
</dbReference>
<dbReference type="Reactome" id="R-BTA-6809371">
    <property type="pathway name" value="Formation of the cornified envelope"/>
</dbReference>
<dbReference type="Proteomes" id="UP000009136">
    <property type="component" value="Chromosome 19"/>
</dbReference>
<dbReference type="Bgee" id="ENSBTAG00000030555">
    <property type="expression patterns" value="Expressed in zone of skin and 8 other cell types or tissues"/>
</dbReference>
<dbReference type="GO" id="GO:0005737">
    <property type="term" value="C:cytoplasm"/>
    <property type="evidence" value="ECO:0007669"/>
    <property type="project" value="UniProtKB-SubCell"/>
</dbReference>
<dbReference type="GO" id="GO:0005856">
    <property type="term" value="C:cytoskeleton"/>
    <property type="evidence" value="ECO:0000318"/>
    <property type="project" value="GO_Central"/>
</dbReference>
<dbReference type="GO" id="GO:0005882">
    <property type="term" value="C:intermediate filament"/>
    <property type="evidence" value="ECO:0007669"/>
    <property type="project" value="UniProtKB-KW"/>
</dbReference>
<dbReference type="GO" id="GO:0005198">
    <property type="term" value="F:structural molecule activity"/>
    <property type="evidence" value="ECO:0007669"/>
    <property type="project" value="InterPro"/>
</dbReference>
<dbReference type="GO" id="GO:0030855">
    <property type="term" value="P:epithelial cell differentiation"/>
    <property type="evidence" value="ECO:0000318"/>
    <property type="project" value="GO_Central"/>
</dbReference>
<dbReference type="GO" id="GO:0031069">
    <property type="term" value="P:hair follicle morphogenesis"/>
    <property type="evidence" value="ECO:0000318"/>
    <property type="project" value="GO_Central"/>
</dbReference>
<dbReference type="GO" id="GO:0045109">
    <property type="term" value="P:intermediate filament organization"/>
    <property type="evidence" value="ECO:0000318"/>
    <property type="project" value="GO_Central"/>
</dbReference>
<dbReference type="FunFam" id="1.20.5.1160:FF:000002">
    <property type="entry name" value="Type I keratin 10"/>
    <property type="match status" value="1"/>
</dbReference>
<dbReference type="FunFam" id="1.20.5.170:FF:000002">
    <property type="entry name" value="Type I keratin KA11"/>
    <property type="match status" value="1"/>
</dbReference>
<dbReference type="FunFam" id="1.20.5.500:FF:000001">
    <property type="entry name" value="Type II keratin 23"/>
    <property type="match status" value="1"/>
</dbReference>
<dbReference type="Gene3D" id="1.20.5.170">
    <property type="match status" value="1"/>
</dbReference>
<dbReference type="Gene3D" id="1.20.5.500">
    <property type="entry name" value="Single helix bin"/>
    <property type="match status" value="1"/>
</dbReference>
<dbReference type="Gene3D" id="1.20.5.1160">
    <property type="entry name" value="Vasodilator-stimulated phosphoprotein"/>
    <property type="match status" value="1"/>
</dbReference>
<dbReference type="InterPro" id="IPR039008">
    <property type="entry name" value="IF_rod_dom"/>
</dbReference>
<dbReference type="InterPro" id="IPR002957">
    <property type="entry name" value="Keratin_I"/>
</dbReference>
<dbReference type="PANTHER" id="PTHR23239">
    <property type="entry name" value="INTERMEDIATE FILAMENT"/>
    <property type="match status" value="1"/>
</dbReference>
<dbReference type="PANTHER" id="PTHR23239:SF215">
    <property type="entry name" value="KERATIN, TYPE I CYTOSKELETAL 28"/>
    <property type="match status" value="1"/>
</dbReference>
<dbReference type="Pfam" id="PF00038">
    <property type="entry name" value="Filament"/>
    <property type="match status" value="1"/>
</dbReference>
<dbReference type="PRINTS" id="PR01248">
    <property type="entry name" value="TYPE1KERATIN"/>
</dbReference>
<dbReference type="SMART" id="SM01391">
    <property type="entry name" value="Filament"/>
    <property type="match status" value="1"/>
</dbReference>
<dbReference type="SUPFAM" id="SSF64593">
    <property type="entry name" value="Intermediate filament protein, coiled coil region"/>
    <property type="match status" value="2"/>
</dbReference>
<dbReference type="PROSITE" id="PS51842">
    <property type="entry name" value="IF_ROD_2"/>
    <property type="match status" value="1"/>
</dbReference>
<comment type="function">
    <text evidence="1">Essential for the proper assembly of types I and II keratin protein complexes and the formation of keratin intermediate filaments in the inner root sheath (irs).</text>
</comment>
<comment type="subunit">
    <text evidence="6">Heterotetramer of two type I and two type II keratins.</text>
</comment>
<comment type="subcellular location">
    <subcellularLocation>
        <location evidence="1">Cytoplasm</location>
    </subcellularLocation>
</comment>
<comment type="miscellaneous">
    <text evidence="6">There are two types of cytoskeletal and microfibrillar keratin: I (acidic; 40-55 kDa) and II (neutral to basic; 56-70 kDa).</text>
</comment>
<comment type="similarity">
    <text evidence="4">Belongs to the intermediate filament family.</text>
</comment>
<reference evidence="7" key="1">
    <citation type="submission" date="2006-06" db="EMBL/GenBank/DDBJ databases">
        <authorList>
            <consortium name="NIH - Mammalian Gene Collection (MGC) project"/>
        </authorList>
    </citation>
    <scope>NUCLEOTIDE SEQUENCE [LARGE SCALE MRNA]</scope>
    <source>
        <strain evidence="7">Hereford</strain>
        <tissue evidence="7">Fetal skin</tissue>
    </source>
</reference>
<keyword id="KW-0175">Coiled coil</keyword>
<keyword id="KW-0963">Cytoplasm</keyword>
<keyword id="KW-0403">Intermediate filament</keyword>
<keyword id="KW-0416">Keratin</keyword>
<keyword id="KW-1185">Reference proteome</keyword>
<protein>
    <recommendedName>
        <fullName>Keratin, type I cytoskeletal 28</fullName>
    </recommendedName>
    <alternativeName>
        <fullName>Cytokeratin-28</fullName>
        <shortName>CK-28</shortName>
    </alternativeName>
    <alternativeName>
        <fullName>Keratin-28</fullName>
        <shortName>K28</shortName>
    </alternativeName>
    <alternativeName>
        <fullName>Type I inner root sheath-specific keratin-K25irs4</fullName>
    </alternativeName>
</protein>
<name>K1C28_BOVIN</name>
<gene>
    <name evidence="2" type="primary">KRT28</name>
</gene>
<accession>Q148H6</accession>
<feature type="chain" id="PRO_0000312704" description="Keratin, type I cytoskeletal 28">
    <location>
        <begin position="1"/>
        <end position="464"/>
    </location>
</feature>
<feature type="domain" description="IF rod" evidence="4">
    <location>
        <begin position="86"/>
        <end position="401"/>
    </location>
</feature>
<feature type="region of interest" description="Head" evidence="3">
    <location>
        <begin position="1"/>
        <end position="85"/>
    </location>
</feature>
<feature type="region of interest" description="Coil 1A" evidence="3">
    <location>
        <begin position="86"/>
        <end position="121"/>
    </location>
</feature>
<feature type="region of interest" description="Linker 1" evidence="3">
    <location>
        <begin position="122"/>
        <end position="143"/>
    </location>
</feature>
<feature type="region of interest" description="Coil 1B" evidence="3">
    <location>
        <begin position="144"/>
        <end position="235"/>
    </location>
</feature>
<feature type="region of interest" description="Linker 12" evidence="3">
    <location>
        <begin position="236"/>
        <end position="258"/>
    </location>
</feature>
<feature type="region of interest" description="Coil 2" evidence="3">
    <location>
        <begin position="259"/>
        <end position="397"/>
    </location>
</feature>
<feature type="region of interest" description="Tail" evidence="3">
    <location>
        <begin position="398"/>
        <end position="464"/>
    </location>
</feature>
<feature type="region of interest" description="Disordered" evidence="5">
    <location>
        <begin position="402"/>
        <end position="422"/>
    </location>
</feature>
<feature type="region of interest" description="Disordered" evidence="5">
    <location>
        <begin position="440"/>
        <end position="464"/>
    </location>
</feature>
<feature type="compositionally biased region" description="Low complexity" evidence="5">
    <location>
        <begin position="402"/>
        <end position="417"/>
    </location>
</feature>
<sequence>MSLRFSSGSRHICLRSGTESVRPSSGGTGFAGSNVYGNSGAGCGFSYALGGGLGSLPGGDHAGGIPGSGTCVGFAGSEGGLFSGNEKVTMQNLNDRLASYLDNVRALEEANAELERKIKSWYEKHGPGSCHGLDHDYSRYHLTIEDLKNKIISSTTANANVILQIDNARLAADDFRLKYENELALHQNTEADINGLRRVLDELTLCRTDQELQYESLSEEMTYLKKNHEEEVKALQCVAGGNVNVEMNAAPGVDLTLLLNNMRAEYEDLAEQNRRDAEAWFNEKSASLQQQISDDAGAASSARGELTEMKRTVQTLDIELQSLLATKHSLECSLMETEGNYCAQLAQIQAQIGALEEQLHQVRTETEGQKLEYEQLLDIKVHLEKEIETYCRLIDGDRNSCSKSKGFGSGSPGNSSKDLSRTTLVKTVVEEIDQRGKVLSSRVQSIEEKTSKMTNGKTKQRVPF</sequence>